<dbReference type="EMBL" id="AC002291">
    <property type="status" value="NOT_ANNOTATED_CDS"/>
    <property type="molecule type" value="Genomic_DNA"/>
</dbReference>
<dbReference type="EMBL" id="CP002684">
    <property type="protein sequence ID" value="AEE35934.1"/>
    <property type="molecule type" value="Genomic_DNA"/>
</dbReference>
<dbReference type="RefSeq" id="NP_001031290.1">
    <property type="nucleotide sequence ID" value="NM_001036213.2"/>
</dbReference>
<dbReference type="SMR" id="Q2V4C3"/>
<dbReference type="GlyGen" id="Q2V4C3">
    <property type="glycosylation" value="1 site"/>
</dbReference>
<dbReference type="PaxDb" id="3702-AT1G77093.1"/>
<dbReference type="ProteomicsDB" id="224258"/>
<dbReference type="EnsemblPlants" id="AT1G77093.1">
    <property type="protein sequence ID" value="AT1G77093.1"/>
    <property type="gene ID" value="AT1G77093"/>
</dbReference>
<dbReference type="GeneID" id="3767714"/>
<dbReference type="Gramene" id="AT1G77093.1">
    <property type="protein sequence ID" value="AT1G77093.1"/>
    <property type="gene ID" value="AT1G77093"/>
</dbReference>
<dbReference type="KEGG" id="ath:AT1G77093"/>
<dbReference type="Araport" id="AT1G77093"/>
<dbReference type="TAIR" id="AT1G77093"/>
<dbReference type="HOGENOM" id="CLU_2761249_0_0_1"/>
<dbReference type="InParanoid" id="Q2V4C3"/>
<dbReference type="OrthoDB" id="10277964at2759"/>
<dbReference type="PhylomeDB" id="Q2V4C3"/>
<dbReference type="PRO" id="PR:Q2V4C3"/>
<dbReference type="Proteomes" id="UP000006548">
    <property type="component" value="Chromosome 1"/>
</dbReference>
<dbReference type="ExpressionAtlas" id="Q2V4C3">
    <property type="expression patterns" value="baseline and differential"/>
</dbReference>
<dbReference type="GO" id="GO:0005576">
    <property type="term" value="C:extracellular region"/>
    <property type="evidence" value="ECO:0007669"/>
    <property type="project" value="UniProtKB-SubCell"/>
</dbReference>
<dbReference type="GO" id="GO:0050832">
    <property type="term" value="P:defense response to fungus"/>
    <property type="evidence" value="ECO:0007669"/>
    <property type="project" value="UniProtKB-KW"/>
</dbReference>
<dbReference type="GO" id="GO:0031640">
    <property type="term" value="P:killing of cells of another organism"/>
    <property type="evidence" value="ECO:0007669"/>
    <property type="project" value="UniProtKB-KW"/>
</dbReference>
<comment type="subcellular location">
    <subcellularLocation>
        <location evidence="1">Secreted</location>
    </subcellularLocation>
</comment>
<comment type="similarity">
    <text evidence="3">Belongs to the DEFL family.</text>
</comment>
<comment type="caution">
    <text evidence="3">Lacks 1 of the 4 disulfide bonds, which are conserved features of the family.</text>
</comment>
<keyword id="KW-0929">Antimicrobial</keyword>
<keyword id="KW-1015">Disulfide bond</keyword>
<keyword id="KW-0295">Fungicide</keyword>
<keyword id="KW-0611">Plant defense</keyword>
<keyword id="KW-1185">Reference proteome</keyword>
<keyword id="KW-0964">Secreted</keyword>
<keyword id="KW-0732">Signal</keyword>
<reference key="1">
    <citation type="journal article" date="2000" name="Nature">
        <title>Sequence and analysis of chromosome 1 of the plant Arabidopsis thaliana.</title>
        <authorList>
            <person name="Theologis A."/>
            <person name="Ecker J.R."/>
            <person name="Palm C.J."/>
            <person name="Federspiel N.A."/>
            <person name="Kaul S."/>
            <person name="White O."/>
            <person name="Alonso J."/>
            <person name="Altafi H."/>
            <person name="Araujo R."/>
            <person name="Bowman C.L."/>
            <person name="Brooks S.Y."/>
            <person name="Buehler E."/>
            <person name="Chan A."/>
            <person name="Chao Q."/>
            <person name="Chen H."/>
            <person name="Cheuk R.F."/>
            <person name="Chin C.W."/>
            <person name="Chung M.K."/>
            <person name="Conn L."/>
            <person name="Conway A.B."/>
            <person name="Conway A.R."/>
            <person name="Creasy T.H."/>
            <person name="Dewar K."/>
            <person name="Dunn P."/>
            <person name="Etgu P."/>
            <person name="Feldblyum T.V."/>
            <person name="Feng J.-D."/>
            <person name="Fong B."/>
            <person name="Fujii C.Y."/>
            <person name="Gill J.E."/>
            <person name="Goldsmith A.D."/>
            <person name="Haas B."/>
            <person name="Hansen N.F."/>
            <person name="Hughes B."/>
            <person name="Huizar L."/>
            <person name="Hunter J.L."/>
            <person name="Jenkins J."/>
            <person name="Johnson-Hopson C."/>
            <person name="Khan S."/>
            <person name="Khaykin E."/>
            <person name="Kim C.J."/>
            <person name="Koo H.L."/>
            <person name="Kremenetskaia I."/>
            <person name="Kurtz D.B."/>
            <person name="Kwan A."/>
            <person name="Lam B."/>
            <person name="Langin-Hooper S."/>
            <person name="Lee A."/>
            <person name="Lee J.M."/>
            <person name="Lenz C.A."/>
            <person name="Li J.H."/>
            <person name="Li Y.-P."/>
            <person name="Lin X."/>
            <person name="Liu S.X."/>
            <person name="Liu Z.A."/>
            <person name="Luros J.S."/>
            <person name="Maiti R."/>
            <person name="Marziali A."/>
            <person name="Militscher J."/>
            <person name="Miranda M."/>
            <person name="Nguyen M."/>
            <person name="Nierman W.C."/>
            <person name="Osborne B.I."/>
            <person name="Pai G."/>
            <person name="Peterson J."/>
            <person name="Pham P.K."/>
            <person name="Rizzo M."/>
            <person name="Rooney T."/>
            <person name="Rowley D."/>
            <person name="Sakano H."/>
            <person name="Salzberg S.L."/>
            <person name="Schwartz J.R."/>
            <person name="Shinn P."/>
            <person name="Southwick A.M."/>
            <person name="Sun H."/>
            <person name="Tallon L.J."/>
            <person name="Tambunga G."/>
            <person name="Toriumi M.J."/>
            <person name="Town C.D."/>
            <person name="Utterback T."/>
            <person name="Van Aken S."/>
            <person name="Vaysberg M."/>
            <person name="Vysotskaia V.S."/>
            <person name="Walker M."/>
            <person name="Wu D."/>
            <person name="Yu G."/>
            <person name="Fraser C.M."/>
            <person name="Venter J.C."/>
            <person name="Davis R.W."/>
        </authorList>
    </citation>
    <scope>NUCLEOTIDE SEQUENCE [LARGE SCALE GENOMIC DNA]</scope>
    <source>
        <strain>cv. Columbia</strain>
    </source>
</reference>
<reference key="2">
    <citation type="journal article" date="2017" name="Plant J.">
        <title>Araport11: a complete reannotation of the Arabidopsis thaliana reference genome.</title>
        <authorList>
            <person name="Cheng C.Y."/>
            <person name="Krishnakumar V."/>
            <person name="Chan A.P."/>
            <person name="Thibaud-Nissen F."/>
            <person name="Schobel S."/>
            <person name="Town C.D."/>
        </authorList>
    </citation>
    <scope>GENOME REANNOTATION</scope>
    <source>
        <strain>cv. Columbia</strain>
    </source>
</reference>
<reference key="3">
    <citation type="journal article" date="2005" name="Plant Physiol.">
        <title>Genome organization of more than 300 defensin-like genes in Arabidopsis.</title>
        <authorList>
            <person name="Silverstein K.A.T."/>
            <person name="Graham M.A."/>
            <person name="Paape T.D."/>
            <person name="VandenBosch K.A."/>
        </authorList>
    </citation>
    <scope>GENE FAMILY</scope>
</reference>
<protein>
    <recommendedName>
        <fullName>Defensin-like protein 281</fullName>
    </recommendedName>
</protein>
<organism>
    <name type="scientific">Arabidopsis thaliana</name>
    <name type="common">Mouse-ear cress</name>
    <dbReference type="NCBI Taxonomy" id="3702"/>
    <lineage>
        <taxon>Eukaryota</taxon>
        <taxon>Viridiplantae</taxon>
        <taxon>Streptophyta</taxon>
        <taxon>Embryophyta</taxon>
        <taxon>Tracheophyta</taxon>
        <taxon>Spermatophyta</taxon>
        <taxon>Magnoliopsida</taxon>
        <taxon>eudicotyledons</taxon>
        <taxon>Gunneridae</taxon>
        <taxon>Pentapetalae</taxon>
        <taxon>rosids</taxon>
        <taxon>malvids</taxon>
        <taxon>Brassicales</taxon>
        <taxon>Brassicaceae</taxon>
        <taxon>Camelineae</taxon>
        <taxon>Arabidopsis</taxon>
    </lineage>
</organism>
<proteinExistence type="evidence at transcript level"/>
<evidence type="ECO:0000250" key="1"/>
<evidence type="ECO:0000255" key="2"/>
<evidence type="ECO:0000305" key="3"/>
<feature type="signal peptide" evidence="2">
    <location>
        <begin position="1"/>
        <end position="23"/>
    </location>
</feature>
<feature type="chain" id="PRO_0000379742" description="Defensin-like protein 281">
    <location>
        <begin position="24"/>
        <end position="78"/>
    </location>
</feature>
<feature type="disulfide bond" evidence="1">
    <location>
        <begin position="37"/>
        <end position="60"/>
    </location>
</feature>
<feature type="disulfide bond" evidence="1">
    <location>
        <begin position="46"/>
        <end position="72"/>
    </location>
</feature>
<feature type="disulfide bond" evidence="1">
    <location>
        <begin position="50"/>
        <end position="74"/>
    </location>
</feature>
<gene>
    <name type="ordered locus">At1g77093</name>
    <name type="ORF">F22K20</name>
</gene>
<accession>Q2V4C3</accession>
<sequence>MASTKYLVLLFICLSVLLTPGLGTDPVPTPPGLHIPCGKGFTSKECNKYCTGVGYRRGYCAPDEEYPQISSCYCKWRI</sequence>
<name>DF281_ARATH</name>